<keyword id="KW-0687">Ribonucleoprotein</keyword>
<keyword id="KW-0689">Ribosomal protein</keyword>
<organism>
    <name type="scientific">Aliivibrio salmonicida (strain LFI1238)</name>
    <name type="common">Vibrio salmonicida (strain LFI1238)</name>
    <dbReference type="NCBI Taxonomy" id="316275"/>
    <lineage>
        <taxon>Bacteria</taxon>
        <taxon>Pseudomonadati</taxon>
        <taxon>Pseudomonadota</taxon>
        <taxon>Gammaproteobacteria</taxon>
        <taxon>Vibrionales</taxon>
        <taxon>Vibrionaceae</taxon>
        <taxon>Aliivibrio</taxon>
    </lineage>
</organism>
<protein>
    <recommendedName>
        <fullName evidence="1">Small ribosomal subunit protein uS9</fullName>
    </recommendedName>
    <alternativeName>
        <fullName evidence="2">30S ribosomal protein S9</fullName>
    </alternativeName>
</protein>
<feature type="chain" id="PRO_1000128068" description="Small ribosomal subunit protein uS9">
    <location>
        <begin position="1"/>
        <end position="130"/>
    </location>
</feature>
<sequence length="130" mass="14498">MAENQYYGTGRRKSSAARVFIKPGTGNIVINKRSLEVYFGRPTARMVVNQPLELVEMTDKLDLFITVSGGGISGQAGAIRHGITRALMQFDETLRPALRAAGYVTRDARCVERKKVGLRKARKKPQFSKR</sequence>
<name>RS9_ALISL</name>
<comment type="similarity">
    <text evidence="1">Belongs to the universal ribosomal protein uS9 family.</text>
</comment>
<reference key="1">
    <citation type="journal article" date="2008" name="BMC Genomics">
        <title>The genome sequence of the fish pathogen Aliivibrio salmonicida strain LFI1238 shows extensive evidence of gene decay.</title>
        <authorList>
            <person name="Hjerde E."/>
            <person name="Lorentzen M.S."/>
            <person name="Holden M.T."/>
            <person name="Seeger K."/>
            <person name="Paulsen S."/>
            <person name="Bason N."/>
            <person name="Churcher C."/>
            <person name="Harris D."/>
            <person name="Norbertczak H."/>
            <person name="Quail M.A."/>
            <person name="Sanders S."/>
            <person name="Thurston S."/>
            <person name="Parkhill J."/>
            <person name="Willassen N.P."/>
            <person name="Thomson N.R."/>
        </authorList>
    </citation>
    <scope>NUCLEOTIDE SEQUENCE [LARGE SCALE GENOMIC DNA]</scope>
    <source>
        <strain>LFI1238</strain>
    </source>
</reference>
<evidence type="ECO:0000255" key="1">
    <source>
        <dbReference type="HAMAP-Rule" id="MF_00532"/>
    </source>
</evidence>
<evidence type="ECO:0000305" key="2"/>
<gene>
    <name evidence="1" type="primary">rpsI</name>
    <name type="ordered locus">VSAL_I2663</name>
</gene>
<accession>B6ELJ4</accession>
<dbReference type="EMBL" id="FM178379">
    <property type="protein sequence ID" value="CAQ80347.1"/>
    <property type="molecule type" value="Genomic_DNA"/>
</dbReference>
<dbReference type="RefSeq" id="WP_012551118.1">
    <property type="nucleotide sequence ID" value="NC_011312.1"/>
</dbReference>
<dbReference type="SMR" id="B6ELJ4"/>
<dbReference type="KEGG" id="vsa:VSAL_I2663"/>
<dbReference type="eggNOG" id="COG0103">
    <property type="taxonomic scope" value="Bacteria"/>
</dbReference>
<dbReference type="HOGENOM" id="CLU_046483_2_1_6"/>
<dbReference type="Proteomes" id="UP000001730">
    <property type="component" value="Chromosome 1"/>
</dbReference>
<dbReference type="GO" id="GO:0022627">
    <property type="term" value="C:cytosolic small ribosomal subunit"/>
    <property type="evidence" value="ECO:0007669"/>
    <property type="project" value="TreeGrafter"/>
</dbReference>
<dbReference type="GO" id="GO:0003723">
    <property type="term" value="F:RNA binding"/>
    <property type="evidence" value="ECO:0007669"/>
    <property type="project" value="TreeGrafter"/>
</dbReference>
<dbReference type="GO" id="GO:0003735">
    <property type="term" value="F:structural constituent of ribosome"/>
    <property type="evidence" value="ECO:0007669"/>
    <property type="project" value="InterPro"/>
</dbReference>
<dbReference type="GO" id="GO:0006412">
    <property type="term" value="P:translation"/>
    <property type="evidence" value="ECO:0007669"/>
    <property type="project" value="UniProtKB-UniRule"/>
</dbReference>
<dbReference type="FunFam" id="3.30.230.10:FF:000001">
    <property type="entry name" value="30S ribosomal protein S9"/>
    <property type="match status" value="1"/>
</dbReference>
<dbReference type="Gene3D" id="3.30.230.10">
    <property type="match status" value="1"/>
</dbReference>
<dbReference type="HAMAP" id="MF_00532_B">
    <property type="entry name" value="Ribosomal_uS9_B"/>
    <property type="match status" value="1"/>
</dbReference>
<dbReference type="InterPro" id="IPR020568">
    <property type="entry name" value="Ribosomal_Su5_D2-typ_SF"/>
</dbReference>
<dbReference type="InterPro" id="IPR000754">
    <property type="entry name" value="Ribosomal_uS9"/>
</dbReference>
<dbReference type="InterPro" id="IPR023035">
    <property type="entry name" value="Ribosomal_uS9_bac/plastid"/>
</dbReference>
<dbReference type="InterPro" id="IPR020574">
    <property type="entry name" value="Ribosomal_uS9_CS"/>
</dbReference>
<dbReference type="InterPro" id="IPR014721">
    <property type="entry name" value="Ribsml_uS5_D2-typ_fold_subgr"/>
</dbReference>
<dbReference type="NCBIfam" id="NF001099">
    <property type="entry name" value="PRK00132.1"/>
    <property type="match status" value="1"/>
</dbReference>
<dbReference type="PANTHER" id="PTHR21569">
    <property type="entry name" value="RIBOSOMAL PROTEIN S9"/>
    <property type="match status" value="1"/>
</dbReference>
<dbReference type="PANTHER" id="PTHR21569:SF1">
    <property type="entry name" value="SMALL RIBOSOMAL SUBUNIT PROTEIN US9M"/>
    <property type="match status" value="1"/>
</dbReference>
<dbReference type="Pfam" id="PF00380">
    <property type="entry name" value="Ribosomal_S9"/>
    <property type="match status" value="1"/>
</dbReference>
<dbReference type="SUPFAM" id="SSF54211">
    <property type="entry name" value="Ribosomal protein S5 domain 2-like"/>
    <property type="match status" value="1"/>
</dbReference>
<dbReference type="PROSITE" id="PS00360">
    <property type="entry name" value="RIBOSOMAL_S9"/>
    <property type="match status" value="1"/>
</dbReference>
<proteinExistence type="inferred from homology"/>